<name>TBL3_MOUSE</name>
<protein>
    <recommendedName>
        <fullName>Transducin beta-like protein 3</fullName>
    </recommendedName>
</protein>
<evidence type="ECO:0000250" key="1">
    <source>
        <dbReference type="UniProtKB" id="Q12788"/>
    </source>
</evidence>
<evidence type="ECO:0000305" key="2"/>
<comment type="function">
    <text evidence="1">Part of the small subunit (SSU) processome, first precursor of the small eukaryotic ribosomal subunit. During the assembly of the SSU processome in the nucleolus, many ribosome biogenesis factors, an RNA chaperone and ribosomal proteins associate with the nascent pre-rRNA and work in concert to generate RNA folding, modifications, rearrangements and cleavage as well as targeted degradation of pre-ribosomal RNA by the RNA exosome.</text>
</comment>
<comment type="subunit">
    <text evidence="1">Part of the small subunit (SSU) processome, composed of more than 70 proteins and the RNA chaperone small nucleolar RNA (snoRNA) U3.</text>
</comment>
<comment type="subcellular location">
    <subcellularLocation>
        <location evidence="1">Nucleus</location>
        <location evidence="1">Nucleolus</location>
    </subcellularLocation>
</comment>
<proteinExistence type="evidence at transcript level"/>
<feature type="initiator methionine" description="Removed" evidence="1">
    <location>
        <position position="1"/>
    </location>
</feature>
<feature type="chain" id="PRO_0000362980" description="Transducin beta-like protein 3">
    <location>
        <begin position="2"/>
        <end position="801"/>
    </location>
</feature>
<feature type="repeat" description="WD 1">
    <location>
        <begin position="64"/>
        <end position="105"/>
    </location>
</feature>
<feature type="repeat" description="WD 2">
    <location>
        <begin position="107"/>
        <end position="146"/>
    </location>
</feature>
<feature type="repeat" description="WD 3">
    <location>
        <begin position="149"/>
        <end position="190"/>
    </location>
</feature>
<feature type="repeat" description="WD 4">
    <location>
        <begin position="193"/>
        <end position="232"/>
    </location>
</feature>
<feature type="repeat" description="WD 5">
    <location>
        <begin position="245"/>
        <end position="284"/>
    </location>
</feature>
<feature type="repeat" description="WD 6">
    <location>
        <begin position="290"/>
        <end position="329"/>
    </location>
</feature>
<feature type="repeat" description="WD 7">
    <location>
        <begin position="332"/>
        <end position="372"/>
    </location>
</feature>
<feature type="repeat" description="WD 8">
    <location>
        <begin position="374"/>
        <end position="413"/>
    </location>
</feature>
<feature type="repeat" description="WD 9">
    <location>
        <begin position="419"/>
        <end position="459"/>
    </location>
</feature>
<feature type="repeat" description="WD 10">
    <location>
        <begin position="477"/>
        <end position="516"/>
    </location>
</feature>
<feature type="repeat" description="WD 11">
    <location>
        <begin position="519"/>
        <end position="560"/>
    </location>
</feature>
<feature type="repeat" description="WD 12">
    <location>
        <begin position="562"/>
        <end position="602"/>
    </location>
</feature>
<feature type="repeat" description="WD 13">
    <location>
        <begin position="604"/>
        <end position="642"/>
    </location>
</feature>
<feature type="modified residue" description="N-acetylalanine" evidence="1">
    <location>
        <position position="2"/>
    </location>
</feature>
<feature type="modified residue" description="Phosphoserine" evidence="1">
    <location>
        <position position="257"/>
    </location>
</feature>
<feature type="cross-link" description="Glycyl lysine isopeptide (Lys-Gly) (interchain with G-Cter in SUMO2)" evidence="1">
    <location>
        <position position="407"/>
    </location>
</feature>
<feature type="sequence conflict" description="In Ref. 1; BAE29182." evidence="2" ref="1">
    <original>E</original>
    <variation>G</variation>
    <location>
        <position position="18"/>
    </location>
</feature>
<feature type="sequence conflict" description="In Ref. 2; AAH19504." evidence="2" ref="2">
    <original>A</original>
    <variation>AN</variation>
    <location>
        <position position="457"/>
    </location>
</feature>
<feature type="sequence conflict" description="In Ref. 2; AAH19504." evidence="2" ref="2">
    <original>R</original>
    <variation>Q</variation>
    <location>
        <position position="475"/>
    </location>
</feature>
<feature type="sequence conflict" description="In Ref. 1; BAE38045." evidence="2" ref="1">
    <original>N</original>
    <variation>K</variation>
    <location>
        <position position="483"/>
    </location>
</feature>
<feature type="sequence conflict" description="In Ref. 2; AAH19504." evidence="2" ref="2">
    <original>A</original>
    <variation>V</variation>
    <location>
        <position position="797"/>
    </location>
</feature>
<sequence>MAETAAGLCRFKANYAVERKIEPFYKGGKAQLDQTGHYLFCVCGTKVNILDVASGALLRSLEQEDQEDITSFDLSPDDEVLVTASRALLLAQWAWREGTVTRLWKAIHTAPVASMAFDATSTLLATGGCDGAVRVWDIVQHYGTHHFRGSPGVVHLVAFHPDPTRLLLFSSAVDTSIRVWSLQDRSCLAVLTAHYSAVTSLSFSEGGHTMLSSGRDKICIVWDLQSYQTTRTVPVFESVEASVLLPEQPAPALGVKSSGLHFLTAGDQGILRVWEAASGQCVYTQPQMPGLRQELTHCTLARAADLLLTVTADHNLLLYEAHSLQLQKQFAGYSEEVLDVRFLGPSDSHIVVASNSPCLKVFELQTLACQILHGHTDIVLALDVFRKGWLFASCAKDQSIRIWKMNKAGQVACVAQGSGHTHSVGTICCSRLKESFLVTGSQDCTVKLWPLPEALLAKSTAADSGPVLLQAQTTRRCHDKDINSLAVSPNDKLLATGSQDRTAKLWALPQCQLLGVFTGHRRGLWNVQFSPTDQVLATASADGTIKLWALQDFSCLKTFEGHDASVLKVAFVSRGSQLLSSGSDGLLKLWTIKSNECVRTLDAHEDKVWGLHCSQLDDHAITGGSDSRIILWKDVTEAEQAEEQAKREEQVIKQQELDNLLHEKRYLRALGLAISLDRPHTVLTVIQAIRRDPEACEKLEATVLRLRRDQKEALLRFCVTWNTNSRHCHEAQAVLGVLLRHEAPEELLAYDGVRGSLEALLPYTERHFQRLSRTLQAATFLDFLWHNMKLSPCPAAAPPAL</sequence>
<dbReference type="EMBL" id="AK081966">
    <property type="protein sequence ID" value="BAC38381.1"/>
    <property type="molecule type" value="mRNA"/>
</dbReference>
<dbReference type="EMBL" id="AK137554">
    <property type="protein sequence ID" value="BAE23405.1"/>
    <property type="molecule type" value="mRNA"/>
</dbReference>
<dbReference type="EMBL" id="AK149940">
    <property type="protein sequence ID" value="BAE29182.1"/>
    <property type="molecule type" value="mRNA"/>
</dbReference>
<dbReference type="EMBL" id="AK165125">
    <property type="protein sequence ID" value="BAE38045.1"/>
    <property type="molecule type" value="mRNA"/>
</dbReference>
<dbReference type="EMBL" id="BC019504">
    <property type="protein sequence ID" value="AAH19504.1"/>
    <property type="molecule type" value="mRNA"/>
</dbReference>
<dbReference type="CCDS" id="CCDS28493.1"/>
<dbReference type="RefSeq" id="NP_663371.2">
    <property type="nucleotide sequence ID" value="NM_145396.4"/>
</dbReference>
<dbReference type="SMR" id="Q8C4J7"/>
<dbReference type="BioGRID" id="229469">
    <property type="interactions" value="5"/>
</dbReference>
<dbReference type="FunCoup" id="Q8C4J7">
    <property type="interactions" value="3082"/>
</dbReference>
<dbReference type="STRING" id="10090.ENSMUSP00000120911"/>
<dbReference type="GlyGen" id="Q8C4J7">
    <property type="glycosylation" value="1 site, 1 O-linked glycan (1 site)"/>
</dbReference>
<dbReference type="iPTMnet" id="Q8C4J7"/>
<dbReference type="PhosphoSitePlus" id="Q8C4J7"/>
<dbReference type="SwissPalm" id="Q8C4J7"/>
<dbReference type="PaxDb" id="10090-ENSMUSP00000120911"/>
<dbReference type="PeptideAtlas" id="Q8C4J7"/>
<dbReference type="ProteomicsDB" id="259360"/>
<dbReference type="Pumba" id="Q8C4J7"/>
<dbReference type="Antibodypedia" id="23366">
    <property type="antibodies" value="74 antibodies from 16 providers"/>
</dbReference>
<dbReference type="DNASU" id="213773"/>
<dbReference type="Ensembl" id="ENSMUST00000126319.8">
    <property type="protein sequence ID" value="ENSMUSP00000120911.2"/>
    <property type="gene ID" value="ENSMUSG00000040688.17"/>
</dbReference>
<dbReference type="GeneID" id="213773"/>
<dbReference type="KEGG" id="mmu:213773"/>
<dbReference type="UCSC" id="uc008axv.1">
    <property type="organism name" value="mouse"/>
</dbReference>
<dbReference type="AGR" id="MGI:2384863"/>
<dbReference type="CTD" id="10607"/>
<dbReference type="MGI" id="MGI:2384863">
    <property type="gene designation" value="Tbl3"/>
</dbReference>
<dbReference type="VEuPathDB" id="HostDB:ENSMUSG00000040688"/>
<dbReference type="eggNOG" id="KOG0319">
    <property type="taxonomic scope" value="Eukaryota"/>
</dbReference>
<dbReference type="GeneTree" id="ENSGT00940000157651"/>
<dbReference type="HOGENOM" id="CLU_009276_1_0_1"/>
<dbReference type="InParanoid" id="Q8C4J7"/>
<dbReference type="OMA" id="PYVQRHF"/>
<dbReference type="OrthoDB" id="5414888at2759"/>
<dbReference type="PhylomeDB" id="Q8C4J7"/>
<dbReference type="TreeFam" id="TF314872"/>
<dbReference type="Reactome" id="R-MMU-6791226">
    <property type="pathway name" value="Major pathway of rRNA processing in the nucleolus and cytosol"/>
</dbReference>
<dbReference type="BioGRID-ORCS" id="213773">
    <property type="hits" value="30 hits in 81 CRISPR screens"/>
</dbReference>
<dbReference type="ChiTaRS" id="Tbl3">
    <property type="organism name" value="mouse"/>
</dbReference>
<dbReference type="PRO" id="PR:Q8C4J7"/>
<dbReference type="Proteomes" id="UP000000589">
    <property type="component" value="Chromosome 17"/>
</dbReference>
<dbReference type="RNAct" id="Q8C4J7">
    <property type="molecule type" value="protein"/>
</dbReference>
<dbReference type="Bgee" id="ENSMUSG00000040688">
    <property type="expression patterns" value="Expressed in spermatocyte and 238 other cell types or tissues"/>
</dbReference>
<dbReference type="ExpressionAtlas" id="Q8C4J7">
    <property type="expression patterns" value="baseline and differential"/>
</dbReference>
<dbReference type="GO" id="GO:0005730">
    <property type="term" value="C:nucleolus"/>
    <property type="evidence" value="ECO:0007669"/>
    <property type="project" value="UniProtKB-SubCell"/>
</dbReference>
<dbReference type="GO" id="GO:0005654">
    <property type="term" value="C:nucleoplasm"/>
    <property type="evidence" value="ECO:0007669"/>
    <property type="project" value="Ensembl"/>
</dbReference>
<dbReference type="GO" id="GO:0032040">
    <property type="term" value="C:small-subunit processome"/>
    <property type="evidence" value="ECO:0000250"/>
    <property type="project" value="UniProtKB"/>
</dbReference>
<dbReference type="GO" id="GO:0042274">
    <property type="term" value="P:ribosomal small subunit biogenesis"/>
    <property type="evidence" value="ECO:0000250"/>
    <property type="project" value="UniProtKB"/>
</dbReference>
<dbReference type="GO" id="GO:0006364">
    <property type="term" value="P:rRNA processing"/>
    <property type="evidence" value="ECO:0007669"/>
    <property type="project" value="InterPro"/>
</dbReference>
<dbReference type="CDD" id="cd00200">
    <property type="entry name" value="WD40"/>
    <property type="match status" value="2"/>
</dbReference>
<dbReference type="FunFam" id="2.130.10.10:FF:000480">
    <property type="entry name" value="Transducin beta like 3"/>
    <property type="match status" value="1"/>
</dbReference>
<dbReference type="FunFam" id="2.130.10.10:FF:000230">
    <property type="entry name" value="Transducin beta-like protein 3"/>
    <property type="match status" value="1"/>
</dbReference>
<dbReference type="FunFam" id="2.130.10.10:FF:000605">
    <property type="entry name" value="Transducin beta-like protein 3"/>
    <property type="match status" value="1"/>
</dbReference>
<dbReference type="FunFam" id="2.130.10.10:FF:000795">
    <property type="entry name" value="Transducin beta-like protein 3"/>
    <property type="match status" value="1"/>
</dbReference>
<dbReference type="Gene3D" id="2.130.10.10">
    <property type="entry name" value="YVTN repeat-like/Quinoprotein amine dehydrogenase"/>
    <property type="match status" value="4"/>
</dbReference>
<dbReference type="InterPro" id="IPR020472">
    <property type="entry name" value="G-protein_beta_WD-40_rep"/>
</dbReference>
<dbReference type="InterPro" id="IPR013934">
    <property type="entry name" value="Utp13_C"/>
</dbReference>
<dbReference type="InterPro" id="IPR015943">
    <property type="entry name" value="WD40/YVTN_repeat-like_dom_sf"/>
</dbReference>
<dbReference type="InterPro" id="IPR019775">
    <property type="entry name" value="WD40_repeat_CS"/>
</dbReference>
<dbReference type="InterPro" id="IPR036322">
    <property type="entry name" value="WD40_repeat_dom_sf"/>
</dbReference>
<dbReference type="InterPro" id="IPR001680">
    <property type="entry name" value="WD40_rpt"/>
</dbReference>
<dbReference type="PANTHER" id="PTHR19854">
    <property type="entry name" value="TRANSDUCIN BETA-LIKE 3"/>
    <property type="match status" value="1"/>
</dbReference>
<dbReference type="PANTHER" id="PTHR19854:SF15">
    <property type="entry name" value="TRANSDUCIN BETA-LIKE PROTEIN 3"/>
    <property type="match status" value="1"/>
</dbReference>
<dbReference type="Pfam" id="PF08625">
    <property type="entry name" value="Utp13"/>
    <property type="match status" value="1"/>
</dbReference>
<dbReference type="Pfam" id="PF00400">
    <property type="entry name" value="WD40"/>
    <property type="match status" value="9"/>
</dbReference>
<dbReference type="PRINTS" id="PR00320">
    <property type="entry name" value="GPROTEINBRPT"/>
</dbReference>
<dbReference type="SMART" id="SM00320">
    <property type="entry name" value="WD40"/>
    <property type="match status" value="13"/>
</dbReference>
<dbReference type="SUPFAM" id="SSF50978">
    <property type="entry name" value="WD40 repeat-like"/>
    <property type="match status" value="2"/>
</dbReference>
<dbReference type="PROSITE" id="PS00678">
    <property type="entry name" value="WD_REPEATS_1"/>
    <property type="match status" value="2"/>
</dbReference>
<dbReference type="PROSITE" id="PS50082">
    <property type="entry name" value="WD_REPEATS_2"/>
    <property type="match status" value="9"/>
</dbReference>
<dbReference type="PROSITE" id="PS50294">
    <property type="entry name" value="WD_REPEATS_REGION"/>
    <property type="match status" value="1"/>
</dbReference>
<keyword id="KW-0007">Acetylation</keyword>
<keyword id="KW-1017">Isopeptide bond</keyword>
<keyword id="KW-0539">Nucleus</keyword>
<keyword id="KW-0597">Phosphoprotein</keyword>
<keyword id="KW-1185">Reference proteome</keyword>
<keyword id="KW-0677">Repeat</keyword>
<keyword id="KW-0832">Ubl conjugation</keyword>
<keyword id="KW-0853">WD repeat</keyword>
<organism>
    <name type="scientific">Mus musculus</name>
    <name type="common">Mouse</name>
    <dbReference type="NCBI Taxonomy" id="10090"/>
    <lineage>
        <taxon>Eukaryota</taxon>
        <taxon>Metazoa</taxon>
        <taxon>Chordata</taxon>
        <taxon>Craniata</taxon>
        <taxon>Vertebrata</taxon>
        <taxon>Euteleostomi</taxon>
        <taxon>Mammalia</taxon>
        <taxon>Eutheria</taxon>
        <taxon>Euarchontoglires</taxon>
        <taxon>Glires</taxon>
        <taxon>Rodentia</taxon>
        <taxon>Myomorpha</taxon>
        <taxon>Muroidea</taxon>
        <taxon>Muridae</taxon>
        <taxon>Murinae</taxon>
        <taxon>Mus</taxon>
        <taxon>Mus</taxon>
    </lineage>
</organism>
<gene>
    <name type="primary">Tbl3</name>
</gene>
<reference key="1">
    <citation type="journal article" date="2005" name="Science">
        <title>The transcriptional landscape of the mammalian genome.</title>
        <authorList>
            <person name="Carninci P."/>
            <person name="Kasukawa T."/>
            <person name="Katayama S."/>
            <person name="Gough J."/>
            <person name="Frith M.C."/>
            <person name="Maeda N."/>
            <person name="Oyama R."/>
            <person name="Ravasi T."/>
            <person name="Lenhard B."/>
            <person name="Wells C."/>
            <person name="Kodzius R."/>
            <person name="Shimokawa K."/>
            <person name="Bajic V.B."/>
            <person name="Brenner S.E."/>
            <person name="Batalov S."/>
            <person name="Forrest A.R."/>
            <person name="Zavolan M."/>
            <person name="Davis M.J."/>
            <person name="Wilming L.G."/>
            <person name="Aidinis V."/>
            <person name="Allen J.E."/>
            <person name="Ambesi-Impiombato A."/>
            <person name="Apweiler R."/>
            <person name="Aturaliya R.N."/>
            <person name="Bailey T.L."/>
            <person name="Bansal M."/>
            <person name="Baxter L."/>
            <person name="Beisel K.W."/>
            <person name="Bersano T."/>
            <person name="Bono H."/>
            <person name="Chalk A.M."/>
            <person name="Chiu K.P."/>
            <person name="Choudhary V."/>
            <person name="Christoffels A."/>
            <person name="Clutterbuck D.R."/>
            <person name="Crowe M.L."/>
            <person name="Dalla E."/>
            <person name="Dalrymple B.P."/>
            <person name="de Bono B."/>
            <person name="Della Gatta G."/>
            <person name="di Bernardo D."/>
            <person name="Down T."/>
            <person name="Engstrom P."/>
            <person name="Fagiolini M."/>
            <person name="Faulkner G."/>
            <person name="Fletcher C.F."/>
            <person name="Fukushima T."/>
            <person name="Furuno M."/>
            <person name="Futaki S."/>
            <person name="Gariboldi M."/>
            <person name="Georgii-Hemming P."/>
            <person name="Gingeras T.R."/>
            <person name="Gojobori T."/>
            <person name="Green R.E."/>
            <person name="Gustincich S."/>
            <person name="Harbers M."/>
            <person name="Hayashi Y."/>
            <person name="Hensch T.K."/>
            <person name="Hirokawa N."/>
            <person name="Hill D."/>
            <person name="Huminiecki L."/>
            <person name="Iacono M."/>
            <person name="Ikeo K."/>
            <person name="Iwama A."/>
            <person name="Ishikawa T."/>
            <person name="Jakt M."/>
            <person name="Kanapin A."/>
            <person name="Katoh M."/>
            <person name="Kawasawa Y."/>
            <person name="Kelso J."/>
            <person name="Kitamura H."/>
            <person name="Kitano H."/>
            <person name="Kollias G."/>
            <person name="Krishnan S.P."/>
            <person name="Kruger A."/>
            <person name="Kummerfeld S.K."/>
            <person name="Kurochkin I.V."/>
            <person name="Lareau L.F."/>
            <person name="Lazarevic D."/>
            <person name="Lipovich L."/>
            <person name="Liu J."/>
            <person name="Liuni S."/>
            <person name="McWilliam S."/>
            <person name="Madan Babu M."/>
            <person name="Madera M."/>
            <person name="Marchionni L."/>
            <person name="Matsuda H."/>
            <person name="Matsuzawa S."/>
            <person name="Miki H."/>
            <person name="Mignone F."/>
            <person name="Miyake S."/>
            <person name="Morris K."/>
            <person name="Mottagui-Tabar S."/>
            <person name="Mulder N."/>
            <person name="Nakano N."/>
            <person name="Nakauchi H."/>
            <person name="Ng P."/>
            <person name="Nilsson R."/>
            <person name="Nishiguchi S."/>
            <person name="Nishikawa S."/>
            <person name="Nori F."/>
            <person name="Ohara O."/>
            <person name="Okazaki Y."/>
            <person name="Orlando V."/>
            <person name="Pang K.C."/>
            <person name="Pavan W.J."/>
            <person name="Pavesi G."/>
            <person name="Pesole G."/>
            <person name="Petrovsky N."/>
            <person name="Piazza S."/>
            <person name="Reed J."/>
            <person name="Reid J.F."/>
            <person name="Ring B.Z."/>
            <person name="Ringwald M."/>
            <person name="Rost B."/>
            <person name="Ruan Y."/>
            <person name="Salzberg S.L."/>
            <person name="Sandelin A."/>
            <person name="Schneider C."/>
            <person name="Schoenbach C."/>
            <person name="Sekiguchi K."/>
            <person name="Semple C.A."/>
            <person name="Seno S."/>
            <person name="Sessa L."/>
            <person name="Sheng Y."/>
            <person name="Shibata Y."/>
            <person name="Shimada H."/>
            <person name="Shimada K."/>
            <person name="Silva D."/>
            <person name="Sinclair B."/>
            <person name="Sperling S."/>
            <person name="Stupka E."/>
            <person name="Sugiura K."/>
            <person name="Sultana R."/>
            <person name="Takenaka Y."/>
            <person name="Taki K."/>
            <person name="Tammoja K."/>
            <person name="Tan S.L."/>
            <person name="Tang S."/>
            <person name="Taylor M.S."/>
            <person name="Tegner J."/>
            <person name="Teichmann S.A."/>
            <person name="Ueda H.R."/>
            <person name="van Nimwegen E."/>
            <person name="Verardo R."/>
            <person name="Wei C.L."/>
            <person name="Yagi K."/>
            <person name="Yamanishi H."/>
            <person name="Zabarovsky E."/>
            <person name="Zhu S."/>
            <person name="Zimmer A."/>
            <person name="Hide W."/>
            <person name="Bult C."/>
            <person name="Grimmond S.M."/>
            <person name="Teasdale R.D."/>
            <person name="Liu E.T."/>
            <person name="Brusic V."/>
            <person name="Quackenbush J."/>
            <person name="Wahlestedt C."/>
            <person name="Mattick J.S."/>
            <person name="Hume D.A."/>
            <person name="Kai C."/>
            <person name="Sasaki D."/>
            <person name="Tomaru Y."/>
            <person name="Fukuda S."/>
            <person name="Kanamori-Katayama M."/>
            <person name="Suzuki M."/>
            <person name="Aoki J."/>
            <person name="Arakawa T."/>
            <person name="Iida J."/>
            <person name="Imamura K."/>
            <person name="Itoh M."/>
            <person name="Kato T."/>
            <person name="Kawaji H."/>
            <person name="Kawagashira N."/>
            <person name="Kawashima T."/>
            <person name="Kojima M."/>
            <person name="Kondo S."/>
            <person name="Konno H."/>
            <person name="Nakano K."/>
            <person name="Ninomiya N."/>
            <person name="Nishio T."/>
            <person name="Okada M."/>
            <person name="Plessy C."/>
            <person name="Shibata K."/>
            <person name="Shiraki T."/>
            <person name="Suzuki S."/>
            <person name="Tagami M."/>
            <person name="Waki K."/>
            <person name="Watahiki A."/>
            <person name="Okamura-Oho Y."/>
            <person name="Suzuki H."/>
            <person name="Kawai J."/>
            <person name="Hayashizaki Y."/>
        </authorList>
    </citation>
    <scope>NUCLEOTIDE SEQUENCE [LARGE SCALE MRNA]</scope>
    <source>
        <strain>C57BL/6J</strain>
        <tissue>Bone</tissue>
        <tissue>Bone marrow</tissue>
        <tissue>Head</tissue>
        <tissue>Ovary</tissue>
    </source>
</reference>
<reference key="2">
    <citation type="journal article" date="2004" name="Genome Res.">
        <title>The status, quality, and expansion of the NIH full-length cDNA project: the Mammalian Gene Collection (MGC).</title>
        <authorList>
            <consortium name="The MGC Project Team"/>
        </authorList>
    </citation>
    <scope>NUCLEOTIDE SEQUENCE [LARGE SCALE MRNA]</scope>
    <source>
        <strain>FVB/N</strain>
        <tissue>Mammary tumor</tissue>
    </source>
</reference>
<accession>Q8C4J7</accession>
<accession>Q3TNP3</accession>
<accession>Q3UDS9</accession>
<accession>Q8VE90</accession>